<proteinExistence type="evidence at protein level"/>
<protein>
    <recommendedName>
        <fullName>Homeobox-leucine zipper protein ATHB-14</fullName>
    </recommendedName>
    <alternativeName>
        <fullName>HD-ZIP protein ATHB-14</fullName>
    </alternativeName>
    <alternativeName>
        <fullName>Homeodomain transcription factor ATHB-14</fullName>
    </alternativeName>
    <alternativeName>
        <fullName>Protein PHABULOSA</fullName>
    </alternativeName>
</protein>
<gene>
    <name type="primary">ATHB-14</name>
    <name type="synonym">PHB</name>
    <name type="ordered locus">At2g34710</name>
    <name type="ORF">T29F13.8</name>
</gene>
<sequence length="852" mass="93218">MMMVHSMSRDMMNRESPDKGLDSGKYVRYTPEQVEALERVYTECPKPSSLRRQQLIRECPILSNIEPKQIKVWFQNRRCREKQRKEAARLQTVNRKLNAMNKLLMEENDRLQKQVSNLVYENGHMKHQLHTASGTTTDNSCESVVVSGQQHQQQNPNPQHQQRDANNPAGLLSIAEEALAEFLSKATGTAVDWVQMIGMKPGPDSIGIVAISRNCSGIAARACGLVSLEPMKVAEILKDRPSWLRDCRSVDTLSVIPAGNGGTIELIYTQMYAPTTLAAARDFWTLRYSTCLEDGSYVVCERSLTSATGGPTGPPSSNFVRAEMKPSGFLIRPCDGGGSILHIVDHVDLDAWSVPEVMRPLYESSKILAQKMTVAALRHVRQIAQETSGEVQYGGGRQPAVLRTFSQRLCRGFNDAVNGFVDDGWSPMGSDGAEDVTVMINLSPGKFGGSQYGNSFLPSFGSGVLCAKASMLLQNVPPAVLVRFLREHRSEWADYGVDAYAAASLRASPFAVPCARAGGFPSNQVILPLAQTVEHEESLEVVRLEGHAYSPEDMGLARDMYLLQLCSGVDENVVGGCAQLVFAPIDESFADDAPLLPSGFRIIPLEQKSTPNGASANRTLDLASALEGSTRQAGEADPNGCNFRSVLTIAFQFTFDNHSRDSVASMARQYVRSIVGSIQRVALAIAPRPGSNISPISVPTSPEALTLVRWISRSYSLHTGADLFGSDSQTSGDTLLHQLWNHSDAILCCSLKTNASPVFTFANQTGLDMLETTLVALQDIMLDKTLDEPGRKALCSEFPKIMQQGYAHLPAGVCASSMGRMVSYEQATVWKVLEDDESNHCLAFMFVNWSFV</sequence>
<organism>
    <name type="scientific">Arabidopsis thaliana</name>
    <name type="common">Mouse-ear cress</name>
    <dbReference type="NCBI Taxonomy" id="3702"/>
    <lineage>
        <taxon>Eukaryota</taxon>
        <taxon>Viridiplantae</taxon>
        <taxon>Streptophyta</taxon>
        <taxon>Embryophyta</taxon>
        <taxon>Tracheophyta</taxon>
        <taxon>Spermatophyta</taxon>
        <taxon>Magnoliopsida</taxon>
        <taxon>eudicotyledons</taxon>
        <taxon>Gunneridae</taxon>
        <taxon>Pentapetalae</taxon>
        <taxon>rosids</taxon>
        <taxon>malvids</taxon>
        <taxon>Brassicales</taxon>
        <taxon>Brassicaceae</taxon>
        <taxon>Camelineae</taxon>
        <taxon>Arabidopsis</taxon>
    </lineage>
</organism>
<keyword id="KW-0175">Coiled coil</keyword>
<keyword id="KW-0221">Differentiation</keyword>
<keyword id="KW-0238">DNA-binding</keyword>
<keyword id="KW-0371">Homeobox</keyword>
<keyword id="KW-0539">Nucleus</keyword>
<keyword id="KW-1185">Reference proteome</keyword>
<keyword id="KW-0804">Transcription</keyword>
<keyword id="KW-0805">Transcription regulation</keyword>
<dbReference type="EMBL" id="Y11122">
    <property type="protein sequence ID" value="CAA72007.1"/>
    <property type="molecule type" value="Genomic_DNA"/>
</dbReference>
<dbReference type="EMBL" id="AJ441291">
    <property type="protein sequence ID" value="CAD29659.1"/>
    <property type="molecule type" value="mRNA"/>
</dbReference>
<dbReference type="EMBL" id="AC003096">
    <property type="protein sequence ID" value="AAC16263.1"/>
    <property type="molecule type" value="Genomic_DNA"/>
</dbReference>
<dbReference type="EMBL" id="CP002685">
    <property type="protein sequence ID" value="AEC09012.1"/>
    <property type="molecule type" value="Genomic_DNA"/>
</dbReference>
<dbReference type="EMBL" id="AY099791">
    <property type="protein sequence ID" value="AAM20642.1"/>
    <property type="molecule type" value="mRNA"/>
</dbReference>
<dbReference type="EMBL" id="BT000335">
    <property type="protein sequence ID" value="AAN15654.1"/>
    <property type="molecule type" value="mRNA"/>
</dbReference>
<dbReference type="PIR" id="T01364">
    <property type="entry name" value="T01364"/>
</dbReference>
<dbReference type="RefSeq" id="NP_181018.1">
    <property type="nucleotide sequence ID" value="NM_129025.4"/>
</dbReference>
<dbReference type="BioGRID" id="3382">
    <property type="interactions" value="5"/>
</dbReference>
<dbReference type="FunCoup" id="O04291">
    <property type="interactions" value="989"/>
</dbReference>
<dbReference type="IntAct" id="O04291">
    <property type="interactions" value="3"/>
</dbReference>
<dbReference type="STRING" id="3702.O04291"/>
<dbReference type="GlyGen" id="O04291">
    <property type="glycosylation" value="1 site"/>
</dbReference>
<dbReference type="iPTMnet" id="O04291"/>
<dbReference type="PaxDb" id="3702-AT2G34710.1"/>
<dbReference type="ProteomicsDB" id="246717"/>
<dbReference type="EnsemblPlants" id="AT2G34710.1">
    <property type="protein sequence ID" value="AT2G34710.1"/>
    <property type="gene ID" value="AT2G34710"/>
</dbReference>
<dbReference type="GeneID" id="818036"/>
<dbReference type="Gramene" id="AT2G34710.1">
    <property type="protein sequence ID" value="AT2G34710.1"/>
    <property type="gene ID" value="AT2G34710"/>
</dbReference>
<dbReference type="KEGG" id="ath:AT2G34710"/>
<dbReference type="Araport" id="AT2G34710"/>
<dbReference type="TAIR" id="AT2G34710">
    <property type="gene designation" value="PHB"/>
</dbReference>
<dbReference type="eggNOG" id="ENOG502QPKR">
    <property type="taxonomic scope" value="Eukaryota"/>
</dbReference>
<dbReference type="HOGENOM" id="CLU_012517_0_0_1"/>
<dbReference type="InParanoid" id="O04291"/>
<dbReference type="OMA" id="ADPNGCN"/>
<dbReference type="OrthoDB" id="125004at2759"/>
<dbReference type="PhylomeDB" id="O04291"/>
<dbReference type="PRO" id="PR:O04291"/>
<dbReference type="Proteomes" id="UP000006548">
    <property type="component" value="Chromosome 2"/>
</dbReference>
<dbReference type="ExpressionAtlas" id="O04291">
    <property type="expression patterns" value="baseline and differential"/>
</dbReference>
<dbReference type="GO" id="GO:0005634">
    <property type="term" value="C:nucleus"/>
    <property type="evidence" value="ECO:0000314"/>
    <property type="project" value="TAIR"/>
</dbReference>
<dbReference type="GO" id="GO:0003677">
    <property type="term" value="F:DNA binding"/>
    <property type="evidence" value="ECO:0000250"/>
    <property type="project" value="TAIR"/>
</dbReference>
<dbReference type="GO" id="GO:0003700">
    <property type="term" value="F:DNA-binding transcription factor activity"/>
    <property type="evidence" value="ECO:0000250"/>
    <property type="project" value="TAIR"/>
</dbReference>
<dbReference type="GO" id="GO:0008289">
    <property type="term" value="F:lipid binding"/>
    <property type="evidence" value="ECO:0007669"/>
    <property type="project" value="InterPro"/>
</dbReference>
<dbReference type="GO" id="GO:0009955">
    <property type="term" value="P:adaxial/abaxial pattern specification"/>
    <property type="evidence" value="ECO:0000315"/>
    <property type="project" value="TAIR"/>
</dbReference>
<dbReference type="GO" id="GO:0030154">
    <property type="term" value="P:cell differentiation"/>
    <property type="evidence" value="ECO:0007669"/>
    <property type="project" value="UniProtKB-KW"/>
</dbReference>
<dbReference type="GO" id="GO:0009855">
    <property type="term" value="P:determination of bilateral symmetry"/>
    <property type="evidence" value="ECO:0000315"/>
    <property type="project" value="TAIR"/>
</dbReference>
<dbReference type="GO" id="GO:0080060">
    <property type="term" value="P:integument development"/>
    <property type="evidence" value="ECO:0000316"/>
    <property type="project" value="TAIR"/>
</dbReference>
<dbReference type="GO" id="GO:0010014">
    <property type="term" value="P:meristem initiation"/>
    <property type="evidence" value="ECO:0000315"/>
    <property type="project" value="TAIR"/>
</dbReference>
<dbReference type="GO" id="GO:0009944">
    <property type="term" value="P:polarity specification of adaxial/abaxial axis"/>
    <property type="evidence" value="ECO:0000315"/>
    <property type="project" value="TAIR"/>
</dbReference>
<dbReference type="GO" id="GO:0010072">
    <property type="term" value="P:primary shoot apical meristem specification"/>
    <property type="evidence" value="ECO:0000315"/>
    <property type="project" value="TAIR"/>
</dbReference>
<dbReference type="CDD" id="cd14686">
    <property type="entry name" value="bZIP"/>
    <property type="match status" value="1"/>
</dbReference>
<dbReference type="CDD" id="cd00086">
    <property type="entry name" value="homeodomain"/>
    <property type="match status" value="1"/>
</dbReference>
<dbReference type="CDD" id="cd08875">
    <property type="entry name" value="START_ArGLABRA2_like"/>
    <property type="match status" value="1"/>
</dbReference>
<dbReference type="FunFam" id="3.30.530.20:FF:000020">
    <property type="entry name" value="homeobox-leucine zipper protein ATHB-15"/>
    <property type="match status" value="1"/>
</dbReference>
<dbReference type="FunFam" id="1.10.10.60:FF:000197">
    <property type="entry name" value="Homeobox-leucine zipper protein REVOLUTA"/>
    <property type="match status" value="1"/>
</dbReference>
<dbReference type="Gene3D" id="3.30.530.20">
    <property type="match status" value="1"/>
</dbReference>
<dbReference type="Gene3D" id="1.10.10.60">
    <property type="entry name" value="Homeodomain-like"/>
    <property type="match status" value="1"/>
</dbReference>
<dbReference type="InterPro" id="IPR001356">
    <property type="entry name" value="HD"/>
</dbReference>
<dbReference type="InterPro" id="IPR044830">
    <property type="entry name" value="HD-Zip_III"/>
</dbReference>
<dbReference type="InterPro" id="IPR009057">
    <property type="entry name" value="Homeodomain-like_sf"/>
</dbReference>
<dbReference type="InterPro" id="IPR013978">
    <property type="entry name" value="MEKHLA"/>
</dbReference>
<dbReference type="InterPro" id="IPR023393">
    <property type="entry name" value="START-like_dom_sf"/>
</dbReference>
<dbReference type="InterPro" id="IPR002913">
    <property type="entry name" value="START_lipid-bd_dom"/>
</dbReference>
<dbReference type="PANTHER" id="PTHR45950">
    <property type="entry name" value="HOMEOBOX-LEUCINE ZIPPER PROTEIN ATHB-14"/>
    <property type="match status" value="1"/>
</dbReference>
<dbReference type="PANTHER" id="PTHR45950:SF7">
    <property type="entry name" value="HOMEOBOX-LEUCINE ZIPPER PROTEIN ATHB-14"/>
    <property type="match status" value="1"/>
</dbReference>
<dbReference type="Pfam" id="PF00046">
    <property type="entry name" value="Homeodomain"/>
    <property type="match status" value="1"/>
</dbReference>
<dbReference type="Pfam" id="PF08670">
    <property type="entry name" value="MEKHLA"/>
    <property type="match status" value="1"/>
</dbReference>
<dbReference type="Pfam" id="PF01852">
    <property type="entry name" value="START"/>
    <property type="match status" value="1"/>
</dbReference>
<dbReference type="SMART" id="SM00389">
    <property type="entry name" value="HOX"/>
    <property type="match status" value="1"/>
</dbReference>
<dbReference type="SMART" id="SM00234">
    <property type="entry name" value="START"/>
    <property type="match status" value="1"/>
</dbReference>
<dbReference type="SUPFAM" id="SSF55961">
    <property type="entry name" value="Bet v1-like"/>
    <property type="match status" value="2"/>
</dbReference>
<dbReference type="SUPFAM" id="SSF46689">
    <property type="entry name" value="Homeodomain-like"/>
    <property type="match status" value="1"/>
</dbReference>
<dbReference type="PROSITE" id="PS50071">
    <property type="entry name" value="HOMEOBOX_2"/>
    <property type="match status" value="1"/>
</dbReference>
<dbReference type="PROSITE" id="PS50848">
    <property type="entry name" value="START"/>
    <property type="match status" value="1"/>
</dbReference>
<feature type="chain" id="PRO_0000331660" description="Homeobox-leucine zipper protein ATHB-14">
    <location>
        <begin position="1"/>
        <end position="852"/>
    </location>
</feature>
<feature type="domain" description="START" evidence="3">
    <location>
        <begin position="164"/>
        <end position="392"/>
    </location>
</feature>
<feature type="DNA-binding region" description="Homeobox" evidence="2">
    <location>
        <begin position="22"/>
        <end position="85"/>
    </location>
</feature>
<feature type="region of interest" description="Disordered" evidence="4">
    <location>
        <begin position="1"/>
        <end position="25"/>
    </location>
</feature>
<feature type="region of interest" description="ZIP domain" evidence="12">
    <location>
        <begin position="80"/>
        <end position="130"/>
    </location>
</feature>
<feature type="region of interest" description="Disordered" evidence="4">
    <location>
        <begin position="130"/>
        <end position="166"/>
    </location>
</feature>
<feature type="coiled-coil region" evidence="1">
    <location>
        <begin position="80"/>
        <end position="122"/>
    </location>
</feature>
<feature type="compositionally biased region" description="Basic and acidic residues" evidence="4">
    <location>
        <begin position="7"/>
        <end position="22"/>
    </location>
</feature>
<feature type="compositionally biased region" description="Polar residues" evidence="4">
    <location>
        <begin position="130"/>
        <end position="148"/>
    </location>
</feature>
<feature type="compositionally biased region" description="Low complexity" evidence="4">
    <location>
        <begin position="149"/>
        <end position="160"/>
    </location>
</feature>
<feature type="mutagenesis site" description="In phb-3d, phb-4d and phb-5d; constitutively active. Transformation of abaxial leaf fates into adaxial leaf fates." evidence="5">
    <original>G</original>
    <variation>D</variation>
    <location>
        <position position="202"/>
    </location>
</feature>
<evidence type="ECO:0000255" key="1"/>
<evidence type="ECO:0000255" key="2">
    <source>
        <dbReference type="PROSITE-ProRule" id="PRU00108"/>
    </source>
</evidence>
<evidence type="ECO:0000255" key="3">
    <source>
        <dbReference type="PROSITE-ProRule" id="PRU00197"/>
    </source>
</evidence>
<evidence type="ECO:0000256" key="4">
    <source>
        <dbReference type="SAM" id="MobiDB-lite"/>
    </source>
</evidence>
<evidence type="ECO:0000269" key="5">
    <source>
    </source>
</evidence>
<evidence type="ECO:0000269" key="6">
    <source>
    </source>
</evidence>
<evidence type="ECO:0000269" key="7">
    <source>
    </source>
</evidence>
<evidence type="ECO:0000269" key="8">
    <source>
    </source>
</evidence>
<evidence type="ECO:0000269" key="9">
    <source>
    </source>
</evidence>
<evidence type="ECO:0000269" key="10">
    <source>
    </source>
</evidence>
<evidence type="ECO:0000269" key="11">
    <source>
    </source>
</evidence>
<evidence type="ECO:0000269" key="12">
    <source>
    </source>
</evidence>
<evidence type="ECO:0000305" key="13"/>
<reference key="1">
    <citation type="journal article" date="1998" name="Plant Mol. Biol.">
        <title>The Arabidopsis Athb-8, -9 and -14 genes are members of a small gene family coding for highly related HD-ZIP proteins.</title>
        <authorList>
            <person name="Sessa G."/>
            <person name="Steindler C."/>
            <person name="Morelli G."/>
            <person name="Ruberti I."/>
        </authorList>
    </citation>
    <scope>NUCLEOTIDE SEQUENCE [GENOMIC DNA]</scope>
    <source>
        <strain>cv. Columbia</strain>
    </source>
</reference>
<reference key="2">
    <citation type="submission" date="2002-04" db="EMBL/GenBank/DDBJ databases">
        <title>Nucleotide sequence of the Arabidopsis ATHB-14 mRNA, encoding an HD-Zip III protein related to ATHB-8.</title>
        <authorList>
            <person name="Ruzza V."/>
            <person name="Carabelli M."/>
            <person name="Ciarbelli A.R."/>
            <person name="Sessa G."/>
            <person name="Steindler C."/>
            <person name="Ruberti I."/>
        </authorList>
    </citation>
    <scope>NUCLEOTIDE SEQUENCE [MRNA]</scope>
    <source>
        <strain>cv. Columbia</strain>
    </source>
</reference>
<reference key="3">
    <citation type="journal article" date="1999" name="Nature">
        <title>Sequence and analysis of chromosome 2 of the plant Arabidopsis thaliana.</title>
        <authorList>
            <person name="Lin X."/>
            <person name="Kaul S."/>
            <person name="Rounsley S.D."/>
            <person name="Shea T.P."/>
            <person name="Benito M.-I."/>
            <person name="Town C.D."/>
            <person name="Fujii C.Y."/>
            <person name="Mason T.M."/>
            <person name="Bowman C.L."/>
            <person name="Barnstead M.E."/>
            <person name="Feldblyum T.V."/>
            <person name="Buell C.R."/>
            <person name="Ketchum K.A."/>
            <person name="Lee J.J."/>
            <person name="Ronning C.M."/>
            <person name="Koo H.L."/>
            <person name="Moffat K.S."/>
            <person name="Cronin L.A."/>
            <person name="Shen M."/>
            <person name="Pai G."/>
            <person name="Van Aken S."/>
            <person name="Umayam L."/>
            <person name="Tallon L.J."/>
            <person name="Gill J.E."/>
            <person name="Adams M.D."/>
            <person name="Carrera A.J."/>
            <person name="Creasy T.H."/>
            <person name="Goodman H.M."/>
            <person name="Somerville C.R."/>
            <person name="Copenhaver G.P."/>
            <person name="Preuss D."/>
            <person name="Nierman W.C."/>
            <person name="White O."/>
            <person name="Eisen J.A."/>
            <person name="Salzberg S.L."/>
            <person name="Fraser C.M."/>
            <person name="Venter J.C."/>
        </authorList>
    </citation>
    <scope>NUCLEOTIDE SEQUENCE [LARGE SCALE GENOMIC DNA]</scope>
    <source>
        <strain>cv. Columbia</strain>
    </source>
</reference>
<reference key="4">
    <citation type="journal article" date="2017" name="Plant J.">
        <title>Araport11: a complete reannotation of the Arabidopsis thaliana reference genome.</title>
        <authorList>
            <person name="Cheng C.Y."/>
            <person name="Krishnakumar V."/>
            <person name="Chan A.P."/>
            <person name="Thibaud-Nissen F."/>
            <person name="Schobel S."/>
            <person name="Town C.D."/>
        </authorList>
    </citation>
    <scope>GENOME REANNOTATION</scope>
    <source>
        <strain>cv. Columbia</strain>
    </source>
</reference>
<reference key="5">
    <citation type="journal article" date="2003" name="Science">
        <title>Empirical analysis of transcriptional activity in the Arabidopsis genome.</title>
        <authorList>
            <person name="Yamada K."/>
            <person name="Lim J."/>
            <person name="Dale J.M."/>
            <person name="Chen H."/>
            <person name="Shinn P."/>
            <person name="Palm C.J."/>
            <person name="Southwick A.M."/>
            <person name="Wu H.C."/>
            <person name="Kim C.J."/>
            <person name="Nguyen M."/>
            <person name="Pham P.K."/>
            <person name="Cheuk R.F."/>
            <person name="Karlin-Newmann G."/>
            <person name="Liu S.X."/>
            <person name="Lam B."/>
            <person name="Sakano H."/>
            <person name="Wu T."/>
            <person name="Yu G."/>
            <person name="Miranda M."/>
            <person name="Quach H.L."/>
            <person name="Tripp M."/>
            <person name="Chang C.H."/>
            <person name="Lee J.M."/>
            <person name="Toriumi M.J."/>
            <person name="Chan M.M."/>
            <person name="Tang C.C."/>
            <person name="Onodera C.S."/>
            <person name="Deng J.M."/>
            <person name="Akiyama K."/>
            <person name="Ansari Y."/>
            <person name="Arakawa T."/>
            <person name="Banh J."/>
            <person name="Banno F."/>
            <person name="Bowser L."/>
            <person name="Brooks S.Y."/>
            <person name="Carninci P."/>
            <person name="Chao Q."/>
            <person name="Choy N."/>
            <person name="Enju A."/>
            <person name="Goldsmith A.D."/>
            <person name="Gurjal M."/>
            <person name="Hansen N.F."/>
            <person name="Hayashizaki Y."/>
            <person name="Johnson-Hopson C."/>
            <person name="Hsuan V.W."/>
            <person name="Iida K."/>
            <person name="Karnes M."/>
            <person name="Khan S."/>
            <person name="Koesema E."/>
            <person name="Ishida J."/>
            <person name="Jiang P.X."/>
            <person name="Jones T."/>
            <person name="Kawai J."/>
            <person name="Kamiya A."/>
            <person name="Meyers C."/>
            <person name="Nakajima M."/>
            <person name="Narusaka M."/>
            <person name="Seki M."/>
            <person name="Sakurai T."/>
            <person name="Satou M."/>
            <person name="Tamse R."/>
            <person name="Vaysberg M."/>
            <person name="Wallender E.K."/>
            <person name="Wong C."/>
            <person name="Yamamura Y."/>
            <person name="Yuan S."/>
            <person name="Shinozaki K."/>
            <person name="Davis R.W."/>
            <person name="Theologis A."/>
            <person name="Ecker J.R."/>
        </authorList>
    </citation>
    <scope>NUCLEOTIDE SEQUENCE [LARGE SCALE MRNA]</scope>
    <source>
        <strain>cv. Columbia</strain>
    </source>
</reference>
<reference key="6">
    <citation type="journal article" date="2001" name="Nature">
        <title>Role of PHABULOSA and PHAVOLUTA in determining radial patterning in shoots.</title>
        <authorList>
            <person name="McConnell J.R."/>
            <person name="Emery J."/>
            <person name="Eshed Y."/>
            <person name="Bao N."/>
            <person name="Bowman J."/>
            <person name="Barton M.K."/>
        </authorList>
    </citation>
    <scope>FUNCTION</scope>
    <scope>DEVELOPMENTAL STAGE</scope>
    <scope>MUTAGENESIS OF GLY-202</scope>
    <scope>TISSUE SPECIFICITY</scope>
</reference>
<reference key="7">
    <citation type="journal article" date="2004" name="Nature">
        <title>Spatially restricted microRNA directs leaf polarity through ARGONAUTE1.</title>
        <authorList>
            <person name="Kidner C.A."/>
            <person name="Martienssen R.A."/>
        </authorList>
    </citation>
    <scope>INDUCTION</scope>
</reference>
<reference key="8">
    <citation type="journal article" date="2004" name="Dev. Biol.">
        <title>Pattern formation during early ovule development in Arabidopsis thaliana.</title>
        <authorList>
            <person name="Sieber P."/>
            <person name="Gheyselinck J."/>
            <person name="Gross-Hardt R."/>
            <person name="Laux T."/>
            <person name="Grossniklaus U."/>
            <person name="Schneitz K."/>
        </authorList>
    </citation>
    <scope>FUNCTION</scope>
    <scope>DEVELOPMENTAL STAGE</scope>
</reference>
<reference key="9">
    <citation type="journal article" date="2005" name="Development">
        <title>Regulation of Arabidopsis shoot apical meristem and lateral organ formation by microRNA miR166g and its AtHD-ZIP target genes.</title>
        <authorList>
            <person name="Williams L."/>
            <person name="Grigg S.P."/>
            <person name="Xie M."/>
            <person name="Christensen S."/>
            <person name="Fletcher J.C."/>
        </authorList>
    </citation>
    <scope>INDUCTION</scope>
</reference>
<reference key="10">
    <citation type="journal article" date="2005" name="Plant Cell">
        <title>Class III homeodomain-leucine zipper gene family members have overlapping, antagonistic, and distinct roles in Arabidopsis development.</title>
        <authorList>
            <person name="Prigge M.J."/>
            <person name="Otsuga D."/>
            <person name="Alonso J.M."/>
            <person name="Ecker J.R."/>
            <person name="Drews G.N."/>
            <person name="Clark S.E."/>
        </authorList>
    </citation>
    <scope>FUNCTION</scope>
</reference>
<reference key="11">
    <citation type="journal article" date="2006" name="Evol. Dev.">
        <title>Evolution of the class III HD-Zip gene family in land plants.</title>
        <authorList>
            <person name="Prigge M.J."/>
            <person name="Clark S.E."/>
        </authorList>
    </citation>
    <scope>GENE FAMILY</scope>
</reference>
<reference key="12">
    <citation type="journal article" date="2007" name="Development">
        <title>The AP2 transcription factors DORNROSCHEN and DORNROSCHEN-LIKE redundantly control Arabidopsis embryo patterning via interaction with PHAVOLUTA.</title>
        <authorList>
            <person name="Chandler J.W."/>
            <person name="Cole M."/>
            <person name="Flier A."/>
            <person name="Grewe B."/>
            <person name="Werr W."/>
        </authorList>
    </citation>
    <scope>INTERACTION WITH ESR1 AND ESR2</scope>
</reference>
<reference key="13">
    <citation type="journal article" date="2007" name="Plant Cell Physiol.">
        <title>Overexpression of miR165 affects apical meristem formation, organ polarity establishment and vascular development in Arabidopsis.</title>
        <authorList>
            <person name="Zhou G.-K."/>
            <person name="Kubo M."/>
            <person name="Zhong R."/>
            <person name="Demura T."/>
            <person name="Ye Z.-H."/>
        </authorList>
    </citation>
    <scope>INDUCTION</scope>
</reference>
<reference key="14">
    <citation type="journal article" date="2008" name="Plant Cell">
        <title>HD-ZIP III activity is modulated by competitive inhibitors via a feedback loop in Arabidopsis shoot apical meristem development.</title>
        <authorList>
            <person name="Kim Y.S."/>
            <person name="Kim S.G."/>
            <person name="Lee M."/>
            <person name="Lee I."/>
            <person name="Park H.Y."/>
            <person name="Seo P.J."/>
            <person name="Jung J.H."/>
            <person name="Kwon E.J."/>
            <person name="Suh S.W."/>
            <person name="Paek K.H."/>
            <person name="Park C.M."/>
        </authorList>
    </citation>
    <scope>INTERACTION WITH ZPR3</scope>
    <scope>DOMAIN</scope>
    <scope>ACTIVITY REGULATION</scope>
</reference>
<reference key="15">
    <citation type="journal article" date="2014" name="Mol. Phylogenet. Evol.">
        <title>Origin of a novel regulatory module by duplication and degeneration of an ancient plant transcription factor.</title>
        <authorList>
            <person name="Floyd S.K."/>
            <person name="Ryan J.G."/>
            <person name="Conway S.J."/>
            <person name="Brenner E."/>
            <person name="Burris K.P."/>
            <person name="Burris J.N."/>
            <person name="Chen T."/>
            <person name="Edger P.P."/>
            <person name="Graham S.W."/>
            <person name="Leebens-Mack J.H."/>
            <person name="Pires J.C."/>
            <person name="Rothfels C.J."/>
            <person name="Sigel E.M."/>
            <person name="Stevenson D.W."/>
            <person name="Neal Stewart C. Jr."/>
            <person name="Wong G.K."/>
            <person name="Bowman J.L."/>
        </authorList>
    </citation>
    <scope>GENE FAMILY</scope>
</reference>
<comment type="function">
    <text evidence="5 7 8">Probable transcription factor involved in the determination of adaxial-abaxial polarity in ovule primordium. Specifies adaxial leaf fates.</text>
</comment>
<comment type="activity regulation">
    <text evidence="12">Inhibited by ZPR3.</text>
</comment>
<comment type="subunit">
    <text evidence="11 12">Homodimer (PubMed:18408069). Heterodimer with ZPR3 (PubMed:18408069). Interacts with ESR1 and ESR2 (PubMed:17376809). Interacts with ZPR3 (PubMed:18408069).</text>
</comment>
<comment type="subcellular location">
    <subcellularLocation>
        <location evidence="13">Nucleus</location>
    </subcellularLocation>
</comment>
<comment type="tissue specificity">
    <text evidence="5">Expressed in the center of the meristem and on the adaxial side of the leaves.</text>
</comment>
<comment type="developmental stage">
    <text evidence="5 7">Expressed at the youngest stages of ovule development, predominantly to the adaxial side of the ovule primordium. Later, expression becomes restricted to a region in the distal chalaza. When the integuments initiate, expressed in the inner integument, with highest expression in the inner layer of the inner integument. Expressed in the vegetative shoot apical meristem (SAM) and initially throughout the presumptive cotyledons. At the globular stage, just before cotyledon outgrowth, expressed at high levels in cotyledon adaxial domains. Expression is lost from the SAM of torpedo stage embryos but is regained late in embryogenesis, extending to young primordia after germination, and becoming progressively restricted to the adaxial domain and the vasculature. Preferentially expressed in the adaxial domain of the developing leaf. Expressed throughout the plastochron 0 (P0) leaf primordium and expression increases in P1 to become preferentially localized to the adaxial leaf domain by the P2 stage (polar expression).</text>
</comment>
<comment type="induction">
    <text evidence="6 9 10">Repressed by miR165 and miR166.</text>
</comment>
<comment type="domain">
    <text evidence="12">The ZIP domain (80-130) is necessary and sufficient for the interaction with ZPR3 (PubMed:18408069).</text>
</comment>
<comment type="similarity">
    <text evidence="13">Belongs to the HD-ZIP homeobox family. Class III subfamily.</text>
</comment>
<accession>O04291</accession>
<name>ATB14_ARATH</name>